<accession>Q9JKA9</accession>
<accession>F1LRY7</accession>
<accession>Q6BCT5</accession>
<accession>Q9QZW6</accession>
<evidence type="ECO:0000250" key="1"/>
<evidence type="ECO:0000250" key="2">
    <source>
        <dbReference type="UniProtKB" id="O60741"/>
    </source>
</evidence>
<evidence type="ECO:0000250" key="3">
    <source>
        <dbReference type="UniProtKB" id="O88703"/>
    </source>
</evidence>
<evidence type="ECO:0000250" key="4">
    <source>
        <dbReference type="UniProtKB" id="Q9UL51"/>
    </source>
</evidence>
<evidence type="ECO:0000255" key="5"/>
<evidence type="ECO:0000256" key="6">
    <source>
        <dbReference type="SAM" id="MobiDB-lite"/>
    </source>
</evidence>
<evidence type="ECO:0000269" key="7">
    <source>
    </source>
</evidence>
<evidence type="ECO:0000269" key="8">
    <source>
    </source>
</evidence>
<evidence type="ECO:0000305" key="9"/>
<evidence type="ECO:0007744" key="10">
    <source>
    </source>
</evidence>
<protein>
    <recommendedName>
        <fullName>Potassium/sodium hyperpolarization-activated cyclic nucleotide-gated channel 2</fullName>
    </recommendedName>
</protein>
<sequence length="863" mass="94710">MDARGGGGRPGDSPGATPAPGPPPPPPPPAPPQPQPPPAPPPNPTTPSHPESADEPGPRSRLCSRDSSCTPGAAKGGANGECGRGEPQCSPEGPARGPKVSFSCRGAASGPAAAEEAGSEEAGPAGEPRGSQASFLQRQFGALLQPGVNKFSLRMFGSQKAVEREQERVKSAGAWIIHPYSDFRFYWDFTMLLFMVGNLIIIPVGITFFKDETTAPWIVFNVVSDTFFLMDLVLNFRTGIVIEDNTEIILDPEKIKKKYLRTWFVVDFVSSIPVDYIFLIVEKGIDSEVYKTARALRIVRFTKILSLLRLLRLSRLIRYIHQWEEIFHMTYDLASAVMRICNLISMMLLLCHWDGCLQFLVPMLQDFPSDCWVSINNMVNHSWSELYSFALFKAMSHMLCIGYGRQAPESMTDIWLTMLSMIVGATCYAMFIGHATALIQSLDSSRRQYQEKYKQVEQYMSFHKLPADFRQKIHDYYEHRYQGKMFDEDSILGELNGPLREEIVNFNCRKLVASMPLFANADPNFVTAMLTKLKFEVFQPGDYIIREGTIGKKMYFIQHGVVSVLTKGNKEMKLSDGSYFGEICLLTRGRRTASVRADTYCRLYSLSVDNFNEVLEEYPMMRRAFETVAIDRLDRIGKKNSILLHKVQHDLSSGVFNNQENAIIQEIVKYDREMVQQAELGQRVGLFPPPPPPQVTSAIATLQQAVAMSFCPQVARPLVGPLALGSPRLVRRAPPGPLPPAASPGPPAASPPAAPSSPRAPRTSPYGVPGSPATRVGPALPARRLSRASRPLSASQPSLPHGAPAPSPAASARPASSSTPRLGPAPTTRTAAPSPDRRDSASPGAASGLDPLDSARSRLSSNL</sequence>
<proteinExistence type="evidence at protein level"/>
<comment type="function">
    <text evidence="8">Hyperpolarization-activated ion channel exhibiting weak selectivity for potassium over sodium ions (PubMed:21796099). Contributes to the native pacemaker currents in heart (If) and in neurons (Ih). Can also transport ammonium in the distal nephron (PubMed:21796099). Involved in the initiation of neuropathic pain in sensory neurons. Produces a large instantaneous current (PubMed:21796099).</text>
</comment>
<comment type="catalytic activity">
    <reaction evidence="8">
        <text>Na(+)(in) = Na(+)(out)</text>
        <dbReference type="Rhea" id="RHEA:34963"/>
        <dbReference type="ChEBI" id="CHEBI:29101"/>
    </reaction>
</comment>
<comment type="catalytic activity">
    <reaction evidence="8">
        <text>K(+)(in) = K(+)(out)</text>
        <dbReference type="Rhea" id="RHEA:29463"/>
        <dbReference type="ChEBI" id="CHEBI:29103"/>
    </reaction>
</comment>
<comment type="catalytic activity">
    <reaction evidence="8">
        <text>NH4(+)(in) = NH4(+)(out)</text>
        <dbReference type="Rhea" id="RHEA:28747"/>
        <dbReference type="ChEBI" id="CHEBI:28938"/>
    </reaction>
</comment>
<comment type="activity regulation">
    <text evidence="3 4 8">Activated by cAMP, and at 10-100 times higher concentrations, also by cGMP. cAMP binding causes a conformation change that leads to the assembly of an active tetramer and channel opening (PubMed:21796099). In the absence of cAMP, the C-terminal region is thought to exert a tonic inhibition on the pore when HCN2 is in a non-tetrameric form (By similarity). Channel activity is modulated by intracellular chloride ions and pH; acidic pH shifts the activation to more negative voltages (By similarity). Phosphatidylinositol-4,5- bisphosphate (PIP(2)) acts as a ligand that allosterically opens HCN2 by shifting voltage-dependent channel activation toward depolarized potentials (By similarity). Inhibited by extracellular cesium ions (By similarity).</text>
</comment>
<comment type="subunit">
    <text evidence="3 4">Homotetramer (By similarity). The channel is composed of a homo- or heterotetrameric complex of pore-forming subunits (By similarity). Heterotetramer with HCN1 (By similarity). Forms an obligate 4:4 complex with accessory subunit PEX5L. Interacts with KCNE2 (By similarity).</text>
</comment>
<comment type="subcellular location">
    <subcellularLocation>
        <location evidence="8">Cell membrane</location>
        <topology evidence="5">Multi-pass membrane protein</topology>
    </subcellularLocation>
</comment>
<comment type="tissue specificity">
    <text evidence="7">Highly expressed in neonatal and adult ventricle and in brain. Highly expressed in the pyramidal layer in hippocampus, in anterior dorsal nucleus in thalamus, in the mammillary nucleus in hypothalamus, in red nucleus, in trigeminal mesencephalic, spinal and principal nuclei, in cochlear and trapezoid nuclei and in the dorsal tegemental nucleus.</text>
</comment>
<comment type="domain">
    <text evidence="2">The segment S4 is the voltage-sensor and is characterized by a series of positively charged amino acids at every third position. Thee ion-conducting pore region is between segment S5 and S6.</text>
</comment>
<comment type="domain">
    <text evidence="3">The cytosolic C-terminal domain contains the cyclic nucleotide-binding domain (CNBD), which mediates modulation by cyclic nucleotides.</text>
</comment>
<comment type="PTM">
    <text evidence="3">Phosphorylation at Ser-641 by PRKG2 shifts the voltage-dependence to more negative voltages, hence counteracting the stimulatory effect of cGMP on gating.</text>
</comment>
<comment type="PTM">
    <text evidence="3">N-glycosylated; required for cell surface trafficking of HCN2.</text>
</comment>
<comment type="PTM">
    <text evidence="4">S-palmitoylated.</text>
</comment>
<comment type="similarity">
    <text evidence="9">Belongs to the potassium channel HCN family.</text>
</comment>
<organism>
    <name type="scientific">Rattus norvegicus</name>
    <name type="common">Rat</name>
    <dbReference type="NCBI Taxonomy" id="10116"/>
    <lineage>
        <taxon>Eukaryota</taxon>
        <taxon>Metazoa</taxon>
        <taxon>Chordata</taxon>
        <taxon>Craniata</taxon>
        <taxon>Vertebrata</taxon>
        <taxon>Euteleostomi</taxon>
        <taxon>Mammalia</taxon>
        <taxon>Eutheria</taxon>
        <taxon>Euarchontoglires</taxon>
        <taxon>Glires</taxon>
        <taxon>Rodentia</taxon>
        <taxon>Myomorpha</taxon>
        <taxon>Muroidea</taxon>
        <taxon>Muridae</taxon>
        <taxon>Murinae</taxon>
        <taxon>Rattus</taxon>
    </lineage>
</organism>
<dbReference type="EMBL" id="AB164197">
    <property type="protein sequence ID" value="BAD32628.1"/>
    <property type="molecule type" value="mRNA"/>
</dbReference>
<dbReference type="EMBL" id="AF247451">
    <property type="protein sequence ID" value="AAF62174.1"/>
    <property type="molecule type" value="mRNA"/>
</dbReference>
<dbReference type="EMBL" id="AF155164">
    <property type="protein sequence ID" value="AAF01491.1"/>
    <property type="molecule type" value="mRNA"/>
</dbReference>
<dbReference type="EMBL" id="AC097878">
    <property type="status" value="NOT_ANNOTATED_CDS"/>
    <property type="molecule type" value="Genomic_DNA"/>
</dbReference>
<dbReference type="EMBL" id="AABR07073281">
    <property type="status" value="NOT_ANNOTATED_CDS"/>
    <property type="molecule type" value="Genomic_DNA"/>
</dbReference>
<dbReference type="RefSeq" id="NP_446136.1">
    <property type="nucleotide sequence ID" value="NM_053684.2"/>
</dbReference>
<dbReference type="BMRB" id="Q9JKA9"/>
<dbReference type="SMR" id="Q9JKA9"/>
<dbReference type="BioGRID" id="250321">
    <property type="interactions" value="1"/>
</dbReference>
<dbReference type="FunCoup" id="Q9JKA9">
    <property type="interactions" value="907"/>
</dbReference>
<dbReference type="STRING" id="10116.ENSRNOP00000011837"/>
<dbReference type="GlyCosmos" id="Q9JKA9">
    <property type="glycosylation" value="1 site, No reported glycans"/>
</dbReference>
<dbReference type="GlyGen" id="Q9JKA9">
    <property type="glycosylation" value="2 sites"/>
</dbReference>
<dbReference type="iPTMnet" id="Q9JKA9"/>
<dbReference type="PhosphoSitePlus" id="Q9JKA9"/>
<dbReference type="PaxDb" id="10116-ENSRNOP00000011837"/>
<dbReference type="ABCD" id="Q9JKA9">
    <property type="antibodies" value="1 sequenced antibody"/>
</dbReference>
<dbReference type="Ensembl" id="ENSRNOT00000011837.7">
    <property type="protein sequence ID" value="ENSRNOP00000011837.7"/>
    <property type="gene ID" value="ENSRNOG00000008831.7"/>
</dbReference>
<dbReference type="Ensembl" id="ENSRNOT00055053819">
    <property type="protein sequence ID" value="ENSRNOP00055044538"/>
    <property type="gene ID" value="ENSRNOG00055031041"/>
</dbReference>
<dbReference type="Ensembl" id="ENSRNOT00060046853">
    <property type="protein sequence ID" value="ENSRNOP00060038962"/>
    <property type="gene ID" value="ENSRNOG00060027027"/>
</dbReference>
<dbReference type="Ensembl" id="ENSRNOT00065034581">
    <property type="protein sequence ID" value="ENSRNOP00065027726"/>
    <property type="gene ID" value="ENSRNOG00065020456"/>
</dbReference>
<dbReference type="GeneID" id="114244"/>
<dbReference type="KEGG" id="rno:114244"/>
<dbReference type="UCSC" id="RGD:620689">
    <property type="organism name" value="rat"/>
</dbReference>
<dbReference type="AGR" id="RGD:620689"/>
<dbReference type="CTD" id="610"/>
<dbReference type="RGD" id="620689">
    <property type="gene designation" value="Hcn2"/>
</dbReference>
<dbReference type="VEuPathDB" id="HostDB:ENSRNOG00000008831"/>
<dbReference type="eggNOG" id="KOG0498">
    <property type="taxonomic scope" value="Eukaryota"/>
</dbReference>
<dbReference type="GeneTree" id="ENSGT00940000156523"/>
<dbReference type="HOGENOM" id="CLU_005746_15_1_1"/>
<dbReference type="InParanoid" id="Q9JKA9"/>
<dbReference type="OMA" id="YFVQHGC"/>
<dbReference type="OrthoDB" id="421226at2759"/>
<dbReference type="PhylomeDB" id="Q9JKA9"/>
<dbReference type="TreeFam" id="TF318250"/>
<dbReference type="Reactome" id="R-RNO-1296061">
    <property type="pathway name" value="HCN channels"/>
</dbReference>
<dbReference type="PRO" id="PR:Q9JKA9"/>
<dbReference type="Proteomes" id="UP000002494">
    <property type="component" value="Chromosome 7"/>
</dbReference>
<dbReference type="Bgee" id="ENSRNOG00000008831">
    <property type="expression patterns" value="Expressed in frontal cortex and 15 other cell types or tissues"/>
</dbReference>
<dbReference type="GO" id="GO:0030424">
    <property type="term" value="C:axon"/>
    <property type="evidence" value="ECO:0000314"/>
    <property type="project" value="RGD"/>
</dbReference>
<dbReference type="GO" id="GO:0030425">
    <property type="term" value="C:dendrite"/>
    <property type="evidence" value="ECO:0000318"/>
    <property type="project" value="GO_Central"/>
</dbReference>
<dbReference type="GO" id="GO:0032590">
    <property type="term" value="C:dendrite membrane"/>
    <property type="evidence" value="ECO:0000314"/>
    <property type="project" value="RGD"/>
</dbReference>
<dbReference type="GO" id="GO:0043198">
    <property type="term" value="C:dendritic shaft"/>
    <property type="evidence" value="ECO:0000314"/>
    <property type="project" value="RGD"/>
</dbReference>
<dbReference type="GO" id="GO:0098855">
    <property type="term" value="C:HCN channel complex"/>
    <property type="evidence" value="ECO:0000266"/>
    <property type="project" value="RGD"/>
</dbReference>
<dbReference type="GO" id="GO:0016020">
    <property type="term" value="C:membrane"/>
    <property type="evidence" value="ECO:0000266"/>
    <property type="project" value="RGD"/>
</dbReference>
<dbReference type="GO" id="GO:0043025">
    <property type="term" value="C:neuronal cell body"/>
    <property type="evidence" value="ECO:0000314"/>
    <property type="project" value="RGD"/>
</dbReference>
<dbReference type="GO" id="GO:0005886">
    <property type="term" value="C:plasma membrane"/>
    <property type="evidence" value="ECO:0000250"/>
    <property type="project" value="UniProtKB"/>
</dbReference>
<dbReference type="GO" id="GO:0036477">
    <property type="term" value="C:somatodendritic compartment"/>
    <property type="evidence" value="ECO:0000314"/>
    <property type="project" value="RGD"/>
</dbReference>
<dbReference type="GO" id="GO:0030552">
    <property type="term" value="F:cAMP binding"/>
    <property type="evidence" value="ECO:0007669"/>
    <property type="project" value="UniProtKB-KW"/>
</dbReference>
<dbReference type="GO" id="GO:0042802">
    <property type="term" value="F:identical protein binding"/>
    <property type="evidence" value="ECO:0000266"/>
    <property type="project" value="RGD"/>
</dbReference>
<dbReference type="GO" id="GO:0005222">
    <property type="term" value="F:intracellularly cAMP-activated cation channel activity"/>
    <property type="evidence" value="ECO:0000250"/>
    <property type="project" value="UniProtKB"/>
</dbReference>
<dbReference type="GO" id="GO:0060090">
    <property type="term" value="F:molecular adaptor activity"/>
    <property type="evidence" value="ECO:0000314"/>
    <property type="project" value="RGD"/>
</dbReference>
<dbReference type="GO" id="GO:0030165">
    <property type="term" value="F:PDZ domain binding"/>
    <property type="evidence" value="ECO:0000353"/>
    <property type="project" value="RGD"/>
</dbReference>
<dbReference type="GO" id="GO:0044877">
    <property type="term" value="F:protein-containing complex binding"/>
    <property type="evidence" value="ECO:0000353"/>
    <property type="project" value="RGD"/>
</dbReference>
<dbReference type="GO" id="GO:0005249">
    <property type="term" value="F:voltage-gated potassium channel activity"/>
    <property type="evidence" value="ECO:0000250"/>
    <property type="project" value="UniProtKB"/>
</dbReference>
<dbReference type="GO" id="GO:0005248">
    <property type="term" value="F:voltage-gated sodium channel activity"/>
    <property type="evidence" value="ECO:0000266"/>
    <property type="project" value="RGD"/>
</dbReference>
<dbReference type="GO" id="GO:0072488">
    <property type="term" value="P:ammonium transmembrane transport"/>
    <property type="evidence" value="ECO:0000314"/>
    <property type="project" value="UniProtKB"/>
</dbReference>
<dbReference type="GO" id="GO:1904045">
    <property type="term" value="P:cellular response to aldosterone"/>
    <property type="evidence" value="ECO:0000270"/>
    <property type="project" value="RGD"/>
</dbReference>
<dbReference type="GO" id="GO:0071320">
    <property type="term" value="P:cellular response to cAMP"/>
    <property type="evidence" value="ECO:0000250"/>
    <property type="project" value="UniProtKB"/>
</dbReference>
<dbReference type="GO" id="GO:0071321">
    <property type="term" value="P:cellular response to cGMP"/>
    <property type="evidence" value="ECO:0000266"/>
    <property type="project" value="RGD"/>
</dbReference>
<dbReference type="GO" id="GO:1990573">
    <property type="term" value="P:potassium ion import across plasma membrane"/>
    <property type="evidence" value="ECO:0000266"/>
    <property type="project" value="RGD"/>
</dbReference>
<dbReference type="GO" id="GO:0071805">
    <property type="term" value="P:potassium ion transmembrane transport"/>
    <property type="evidence" value="ECO:0000314"/>
    <property type="project" value="UniProtKB"/>
</dbReference>
<dbReference type="GO" id="GO:0003254">
    <property type="term" value="P:regulation of membrane depolarization"/>
    <property type="evidence" value="ECO:0000318"/>
    <property type="project" value="GO_Central"/>
</dbReference>
<dbReference type="GO" id="GO:0042391">
    <property type="term" value="P:regulation of membrane potential"/>
    <property type="evidence" value="ECO:0000266"/>
    <property type="project" value="RGD"/>
</dbReference>
<dbReference type="GO" id="GO:0009725">
    <property type="term" value="P:response to hormone"/>
    <property type="evidence" value="ECO:0000270"/>
    <property type="project" value="RGD"/>
</dbReference>
<dbReference type="GO" id="GO:0009410">
    <property type="term" value="P:response to xenobiotic stimulus"/>
    <property type="evidence" value="ECO:0000270"/>
    <property type="project" value="RGD"/>
</dbReference>
<dbReference type="GO" id="GO:0098719">
    <property type="term" value="P:sodium ion import across plasma membrane"/>
    <property type="evidence" value="ECO:0000314"/>
    <property type="project" value="UniProtKB"/>
</dbReference>
<dbReference type="GO" id="GO:0035725">
    <property type="term" value="P:sodium ion transmembrane transport"/>
    <property type="evidence" value="ECO:0000266"/>
    <property type="project" value="RGD"/>
</dbReference>
<dbReference type="CDD" id="cd00038">
    <property type="entry name" value="CAP_ED"/>
    <property type="match status" value="1"/>
</dbReference>
<dbReference type="FunFam" id="1.10.287.70:FF:000031">
    <property type="entry name" value="Potassium/sodium hyperpolarization-activated cyclic nucleotide-gated channel 1, putative"/>
    <property type="match status" value="1"/>
</dbReference>
<dbReference type="FunFam" id="1.10.287.630:FF:000002">
    <property type="entry name" value="Potassium/sodium hyperpolarization-activated cyclic nucleotide-gated channel 4"/>
    <property type="match status" value="1"/>
</dbReference>
<dbReference type="FunFam" id="2.60.120.10:FF:000007">
    <property type="entry name" value="Putative potassium/sodium hyperpolarization-activated cyclic nucleotide-gated channel 2"/>
    <property type="match status" value="1"/>
</dbReference>
<dbReference type="Gene3D" id="1.10.287.70">
    <property type="match status" value="1"/>
</dbReference>
<dbReference type="Gene3D" id="1.10.287.630">
    <property type="entry name" value="Helix hairpin bin"/>
    <property type="match status" value="1"/>
</dbReference>
<dbReference type="Gene3D" id="2.60.120.10">
    <property type="entry name" value="Jelly Rolls"/>
    <property type="match status" value="1"/>
</dbReference>
<dbReference type="InterPro" id="IPR018488">
    <property type="entry name" value="cNMP-bd_CS"/>
</dbReference>
<dbReference type="InterPro" id="IPR000595">
    <property type="entry name" value="cNMP-bd_dom"/>
</dbReference>
<dbReference type="InterPro" id="IPR018490">
    <property type="entry name" value="cNMP-bd_dom_sf"/>
</dbReference>
<dbReference type="InterPro" id="IPR005821">
    <property type="entry name" value="Ion_trans_dom"/>
</dbReference>
<dbReference type="InterPro" id="IPR013621">
    <property type="entry name" value="Ion_trans_N"/>
</dbReference>
<dbReference type="InterPro" id="IPR051413">
    <property type="entry name" value="K/Na_HCN_channel"/>
</dbReference>
<dbReference type="InterPro" id="IPR003938">
    <property type="entry name" value="K_chnl_volt-dep_EAG/ELK/ERG"/>
</dbReference>
<dbReference type="InterPro" id="IPR014710">
    <property type="entry name" value="RmlC-like_jellyroll"/>
</dbReference>
<dbReference type="PANTHER" id="PTHR45689">
    <property type="entry name" value="I[[H]] CHANNEL, ISOFORM E"/>
    <property type="match status" value="1"/>
</dbReference>
<dbReference type="PANTHER" id="PTHR45689:SF11">
    <property type="entry name" value="POTASSIUM_SODIUM HYPERPOLARIZATION-ACTIVATED CYCLIC NUCLEOTIDE-GATED CHANNEL 2"/>
    <property type="match status" value="1"/>
</dbReference>
<dbReference type="Pfam" id="PF00027">
    <property type="entry name" value="cNMP_binding"/>
    <property type="match status" value="1"/>
</dbReference>
<dbReference type="Pfam" id="PF00520">
    <property type="entry name" value="Ion_trans"/>
    <property type="match status" value="1"/>
</dbReference>
<dbReference type="Pfam" id="PF08412">
    <property type="entry name" value="Ion_trans_N"/>
    <property type="match status" value="1"/>
</dbReference>
<dbReference type="PRINTS" id="PR01463">
    <property type="entry name" value="EAGCHANLFMLY"/>
</dbReference>
<dbReference type="SMART" id="SM00100">
    <property type="entry name" value="cNMP"/>
    <property type="match status" value="1"/>
</dbReference>
<dbReference type="SUPFAM" id="SSF51206">
    <property type="entry name" value="cAMP-binding domain-like"/>
    <property type="match status" value="1"/>
</dbReference>
<dbReference type="SUPFAM" id="SSF81324">
    <property type="entry name" value="Voltage-gated potassium channels"/>
    <property type="match status" value="1"/>
</dbReference>
<dbReference type="PROSITE" id="PS00888">
    <property type="entry name" value="CNMP_BINDING_1"/>
    <property type="match status" value="1"/>
</dbReference>
<dbReference type="PROSITE" id="PS50042">
    <property type="entry name" value="CNMP_BINDING_3"/>
    <property type="match status" value="1"/>
</dbReference>
<gene>
    <name type="primary">Hcn2</name>
</gene>
<feature type="chain" id="PRO_0000054113" description="Potassium/sodium hyperpolarization-activated cyclic nucleotide-gated channel 2">
    <location>
        <begin position="1"/>
        <end position="863"/>
    </location>
</feature>
<feature type="topological domain" description="Cytoplasmic" evidence="5">
    <location>
        <begin position="1"/>
        <end position="188"/>
    </location>
</feature>
<feature type="transmembrane region" description="Helical; Name=Segment S1" evidence="5">
    <location>
        <begin position="189"/>
        <end position="209"/>
    </location>
</feature>
<feature type="topological domain" description="Extracellular" evidence="5">
    <location>
        <begin position="210"/>
        <end position="213"/>
    </location>
</feature>
<feature type="transmembrane region" description="Helical; Name=Segment S2" evidence="5">
    <location>
        <begin position="214"/>
        <end position="234"/>
    </location>
</feature>
<feature type="topological domain" description="Cytoplasmic" evidence="5">
    <location>
        <begin position="235"/>
        <end position="261"/>
    </location>
</feature>
<feature type="transmembrane region" description="Helical; Name=Segment S3" evidence="5">
    <location>
        <begin position="262"/>
        <end position="282"/>
    </location>
</feature>
<feature type="topological domain" description="Extracellular" evidence="5">
    <location>
        <begin position="283"/>
        <end position="290"/>
    </location>
</feature>
<feature type="transmembrane region" description="Helical; Voltage-sensor; Name=Segment S4" evidence="5">
    <location>
        <begin position="291"/>
        <end position="311"/>
    </location>
</feature>
<feature type="topological domain" description="Cytoplasmic" evidence="5">
    <location>
        <begin position="312"/>
        <end position="342"/>
    </location>
</feature>
<feature type="transmembrane region" description="Helical; Name=Segment S5" evidence="5">
    <location>
        <begin position="343"/>
        <end position="363"/>
    </location>
</feature>
<feature type="topological domain" description="Extracellular" evidence="5">
    <location>
        <begin position="364"/>
        <end position="386"/>
    </location>
</feature>
<feature type="intramembrane region" description="Pore-forming; Name=Segment H5" evidence="5">
    <location>
        <begin position="387"/>
        <end position="408"/>
    </location>
</feature>
<feature type="topological domain" description="Extracellular" evidence="5">
    <location>
        <begin position="409"/>
        <end position="413"/>
    </location>
</feature>
<feature type="transmembrane region" description="Helical; Name=Segment S6" evidence="5">
    <location>
        <begin position="414"/>
        <end position="434"/>
    </location>
</feature>
<feature type="topological domain" description="Cytoplasmic" evidence="5">
    <location>
        <begin position="435"/>
        <end position="863"/>
    </location>
</feature>
<feature type="region of interest" description="Disordered" evidence="6">
    <location>
        <begin position="1"/>
        <end position="131"/>
    </location>
</feature>
<feature type="region of interest" description="Involved in subunit assembly" evidence="1">
    <location>
        <begin position="131"/>
        <end position="182"/>
    </location>
</feature>
<feature type="region of interest" description="Disordered" evidence="6">
    <location>
        <begin position="730"/>
        <end position="863"/>
    </location>
</feature>
<feature type="compositionally biased region" description="Gly residues" evidence="6">
    <location>
        <begin position="1"/>
        <end position="10"/>
    </location>
</feature>
<feature type="compositionally biased region" description="Pro residues" evidence="6">
    <location>
        <begin position="17"/>
        <end position="47"/>
    </location>
</feature>
<feature type="compositionally biased region" description="Low complexity" evidence="6">
    <location>
        <begin position="106"/>
        <end position="128"/>
    </location>
</feature>
<feature type="compositionally biased region" description="Pro residues" evidence="6">
    <location>
        <begin position="734"/>
        <end position="755"/>
    </location>
</feature>
<feature type="compositionally biased region" description="Low complexity" evidence="6">
    <location>
        <begin position="756"/>
        <end position="765"/>
    </location>
</feature>
<feature type="compositionally biased region" description="Low complexity" evidence="6">
    <location>
        <begin position="778"/>
        <end position="834"/>
    </location>
</feature>
<feature type="binding site" evidence="3">
    <location>
        <position position="581"/>
    </location>
    <ligand>
        <name>3',5'-cyclic AMP</name>
        <dbReference type="ChEBI" id="CHEBI:58165"/>
    </ligand>
</feature>
<feature type="binding site" evidence="3">
    <location>
        <position position="582"/>
    </location>
    <ligand>
        <name>3',5'-cyclic AMP</name>
        <dbReference type="ChEBI" id="CHEBI:58165"/>
    </ligand>
</feature>
<feature type="binding site" evidence="3">
    <location>
        <position position="584"/>
    </location>
    <ligand>
        <name>3',5'-cyclic AMP</name>
        <dbReference type="ChEBI" id="CHEBI:58165"/>
    </ligand>
</feature>
<feature type="binding site" evidence="3">
    <location>
        <position position="591"/>
    </location>
    <ligand>
        <name>3',5'-cyclic AMP</name>
        <dbReference type="ChEBI" id="CHEBI:58165"/>
    </ligand>
</feature>
<feature type="binding site" evidence="3">
    <location>
        <position position="592"/>
    </location>
    <ligand>
        <name>3',5'-cyclic AMP</name>
        <dbReference type="ChEBI" id="CHEBI:58165"/>
    </ligand>
</feature>
<feature type="binding site" evidence="3">
    <location>
        <position position="632"/>
    </location>
    <ligand>
        <name>3',5'-cyclic AMP</name>
        <dbReference type="ChEBI" id="CHEBI:58165"/>
    </ligand>
</feature>
<feature type="modified residue" description="Phosphoserine" evidence="10">
    <location>
        <position position="119"/>
    </location>
</feature>
<feature type="modified residue" description="Phosphoserine" evidence="10">
    <location>
        <position position="134"/>
    </location>
</feature>
<feature type="modified residue" description="Phosphoserine; by PKG/PRKG2" evidence="3">
    <location>
        <position position="641"/>
    </location>
</feature>
<feature type="modified residue" description="Phosphoserine" evidence="10">
    <location>
        <position position="726"/>
    </location>
</feature>
<feature type="modified residue" description="Omega-N-methylarginine" evidence="3">
    <location>
        <position position="728"/>
    </location>
</feature>
<feature type="modified residue" description="Phosphoserine" evidence="3">
    <location>
        <position position="743"/>
    </location>
</feature>
<feature type="modified residue" description="Phosphoserine" evidence="10">
    <location>
        <position position="750"/>
    </location>
</feature>
<feature type="modified residue" description="Phosphoserine" evidence="3">
    <location>
        <position position="757"/>
    </location>
</feature>
<feature type="modified residue" description="Phosphoserine" evidence="3">
    <location>
        <position position="840"/>
    </location>
</feature>
<feature type="modified residue" description="Phosphoserine" evidence="10">
    <location>
        <position position="842"/>
    </location>
</feature>
<feature type="modified residue" description="Phosphoserine" evidence="3">
    <location>
        <position position="847"/>
    </location>
</feature>
<feature type="glycosylation site" description="N-linked (GlcNAc...) asparagine" evidence="3">
    <location>
        <position position="380"/>
    </location>
</feature>
<feature type="sequence conflict" description="In Ref. 2; AAF62174." evidence="9" ref="2">
    <original>L</original>
    <variation>F</variation>
    <location>
        <position position="686"/>
    </location>
</feature>
<feature type="sequence conflict" description="In Ref. 2; AAF62174." evidence="9" ref="2">
    <original>P</original>
    <variation>R</variation>
    <location>
        <position position="693"/>
    </location>
</feature>
<feature type="sequence conflict" description="In Ref. 2; AAF62174." evidence="9" ref="2">
    <original>T</original>
    <variation>R</variation>
    <location>
        <position position="696"/>
    </location>
</feature>
<keyword id="KW-0924">Ammonia transport</keyword>
<keyword id="KW-0114">cAMP</keyword>
<keyword id="KW-0116">cAMP-binding</keyword>
<keyword id="KW-1003">Cell membrane</keyword>
<keyword id="KW-0325">Glycoprotein</keyword>
<keyword id="KW-0407">Ion channel</keyword>
<keyword id="KW-0406">Ion transport</keyword>
<keyword id="KW-1071">Ligand-gated ion channel</keyword>
<keyword id="KW-0449">Lipoprotein</keyword>
<keyword id="KW-0472">Membrane</keyword>
<keyword id="KW-0488">Methylation</keyword>
<keyword id="KW-0547">Nucleotide-binding</keyword>
<keyword id="KW-0564">Palmitate</keyword>
<keyword id="KW-0597">Phosphoprotein</keyword>
<keyword id="KW-0630">Potassium</keyword>
<keyword id="KW-0631">Potassium channel</keyword>
<keyword id="KW-0633">Potassium transport</keyword>
<keyword id="KW-1185">Reference proteome</keyword>
<keyword id="KW-0915">Sodium</keyword>
<keyword id="KW-0894">Sodium channel</keyword>
<keyword id="KW-0739">Sodium transport</keyword>
<keyword id="KW-0812">Transmembrane</keyword>
<keyword id="KW-1133">Transmembrane helix</keyword>
<keyword id="KW-0813">Transport</keyword>
<keyword id="KW-0851">Voltage-gated channel</keyword>
<reference key="1">
    <citation type="journal article" date="2004" name="Genes Cells">
        <title>Hyperpolarization-activated, cyclic nucleotide-gated HCN2 cation channel forms a protein assembly with multiple neuronal scaffold proteins in distinct modes of protein-protein interaction.</title>
        <authorList>
            <person name="Kimura K."/>
            <person name="Kitano J."/>
            <person name="Nakajima Y."/>
            <person name="Nakanishi S."/>
        </authorList>
    </citation>
    <scope>NUCLEOTIDE SEQUENCE [MRNA]</scope>
</reference>
<reference key="2">
    <citation type="journal article" date="2000" name="Brain Res. Mol. Brain Res.">
        <title>Cloning and localization of the hyperpolarization-activated cyclic nucleotide-gated channel family in rat brain.</title>
        <authorList>
            <person name="Monteggia L.M."/>
            <person name="Eisch A.J."/>
            <person name="Tang M.D."/>
            <person name="Kaczmarek L.K."/>
            <person name="Nestler E.J."/>
        </authorList>
    </citation>
    <scope>NUCLEOTIDE SEQUENCE [MRNA] OF 30-863</scope>
    <scope>TISSUE SPECIFICITY</scope>
    <source>
        <strain>Sprague-Dawley</strain>
        <tissue>Brain</tissue>
    </source>
</reference>
<reference key="3">
    <citation type="journal article" date="1999" name="Circ. Res.">
        <title>Distribution and prevalence of hyperpolarization-activated cation channel (HCN) mRNA expression in cardiac tissues.</title>
        <authorList>
            <person name="Shi W."/>
            <person name="Wymore R."/>
            <person name="Yu H."/>
            <person name="Wu J."/>
            <person name="Wymore R.T."/>
            <person name="Pan Z."/>
            <person name="Robinson R.B."/>
            <person name="Dixon J.E."/>
            <person name="McKinnon D."/>
            <person name="Cohen I.S."/>
        </authorList>
    </citation>
    <scope>NUCLEOTIDE SEQUENCE [MRNA] OF 184-350</scope>
    <source>
        <tissue>Heart</tissue>
    </source>
</reference>
<reference key="4">
    <citation type="journal article" date="2004" name="Nature">
        <title>Genome sequence of the Brown Norway rat yields insights into mammalian evolution.</title>
        <authorList>
            <person name="Gibbs R.A."/>
            <person name="Weinstock G.M."/>
            <person name="Metzker M.L."/>
            <person name="Muzny D.M."/>
            <person name="Sodergren E.J."/>
            <person name="Scherer S."/>
            <person name="Scott G."/>
            <person name="Steffen D."/>
            <person name="Worley K.C."/>
            <person name="Burch P.E."/>
            <person name="Okwuonu G."/>
            <person name="Hines S."/>
            <person name="Lewis L."/>
            <person name="Deramo C."/>
            <person name="Delgado O."/>
            <person name="Dugan-Rocha S."/>
            <person name="Miner G."/>
            <person name="Morgan M."/>
            <person name="Hawes A."/>
            <person name="Gill R."/>
            <person name="Holt R.A."/>
            <person name="Adams M.D."/>
            <person name="Amanatides P.G."/>
            <person name="Baden-Tillson H."/>
            <person name="Barnstead M."/>
            <person name="Chin S."/>
            <person name="Evans C.A."/>
            <person name="Ferriera S."/>
            <person name="Fosler C."/>
            <person name="Glodek A."/>
            <person name="Gu Z."/>
            <person name="Jennings D."/>
            <person name="Kraft C.L."/>
            <person name="Nguyen T."/>
            <person name="Pfannkoch C.M."/>
            <person name="Sitter C."/>
            <person name="Sutton G.G."/>
            <person name="Venter J.C."/>
            <person name="Woodage T."/>
            <person name="Smith D."/>
            <person name="Lee H.-M."/>
            <person name="Gustafson E."/>
            <person name="Cahill P."/>
            <person name="Kana A."/>
            <person name="Doucette-Stamm L."/>
            <person name="Weinstock K."/>
            <person name="Fechtel K."/>
            <person name="Weiss R.B."/>
            <person name="Dunn D.M."/>
            <person name="Green E.D."/>
            <person name="Blakesley R.W."/>
            <person name="Bouffard G.G."/>
            <person name="De Jong P.J."/>
            <person name="Osoegawa K."/>
            <person name="Zhu B."/>
            <person name="Marra M."/>
            <person name="Schein J."/>
            <person name="Bosdet I."/>
            <person name="Fjell C."/>
            <person name="Jones S."/>
            <person name="Krzywinski M."/>
            <person name="Mathewson C."/>
            <person name="Siddiqui A."/>
            <person name="Wye N."/>
            <person name="McPherson J."/>
            <person name="Zhao S."/>
            <person name="Fraser C.M."/>
            <person name="Shetty J."/>
            <person name="Shatsman S."/>
            <person name="Geer K."/>
            <person name="Chen Y."/>
            <person name="Abramzon S."/>
            <person name="Nierman W.C."/>
            <person name="Havlak P.H."/>
            <person name="Chen R."/>
            <person name="Durbin K.J."/>
            <person name="Egan A."/>
            <person name="Ren Y."/>
            <person name="Song X.-Z."/>
            <person name="Li B."/>
            <person name="Liu Y."/>
            <person name="Qin X."/>
            <person name="Cawley S."/>
            <person name="Cooney A.J."/>
            <person name="D'Souza L.M."/>
            <person name="Martin K."/>
            <person name="Wu J.Q."/>
            <person name="Gonzalez-Garay M.L."/>
            <person name="Jackson A.R."/>
            <person name="Kalafus K.J."/>
            <person name="McLeod M.P."/>
            <person name="Milosavljevic A."/>
            <person name="Virk D."/>
            <person name="Volkov A."/>
            <person name="Wheeler D.A."/>
            <person name="Zhang Z."/>
            <person name="Bailey J.A."/>
            <person name="Eichler E.E."/>
            <person name="Tuzun E."/>
            <person name="Birney E."/>
            <person name="Mongin E."/>
            <person name="Ureta-Vidal A."/>
            <person name="Woodwark C."/>
            <person name="Zdobnov E."/>
            <person name="Bork P."/>
            <person name="Suyama M."/>
            <person name="Torrents D."/>
            <person name="Alexandersson M."/>
            <person name="Trask B.J."/>
            <person name="Young J.M."/>
            <person name="Huang H."/>
            <person name="Wang H."/>
            <person name="Xing H."/>
            <person name="Daniels S."/>
            <person name="Gietzen D."/>
            <person name="Schmidt J."/>
            <person name="Stevens K."/>
            <person name="Vitt U."/>
            <person name="Wingrove J."/>
            <person name="Camara F."/>
            <person name="Mar Alba M."/>
            <person name="Abril J.F."/>
            <person name="Guigo R."/>
            <person name="Smit A."/>
            <person name="Dubchak I."/>
            <person name="Rubin E.M."/>
            <person name="Couronne O."/>
            <person name="Poliakov A."/>
            <person name="Huebner N."/>
            <person name="Ganten D."/>
            <person name="Goesele C."/>
            <person name="Hummel O."/>
            <person name="Kreitler T."/>
            <person name="Lee Y.-A."/>
            <person name="Monti J."/>
            <person name="Schulz H."/>
            <person name="Zimdahl H."/>
            <person name="Himmelbauer H."/>
            <person name="Lehrach H."/>
            <person name="Jacob H.J."/>
            <person name="Bromberg S."/>
            <person name="Gullings-Handley J."/>
            <person name="Jensen-Seaman M.I."/>
            <person name="Kwitek A.E."/>
            <person name="Lazar J."/>
            <person name="Pasko D."/>
            <person name="Tonellato P.J."/>
            <person name="Twigger S."/>
            <person name="Ponting C.P."/>
            <person name="Duarte J.M."/>
            <person name="Rice S."/>
            <person name="Goodstadt L."/>
            <person name="Beatson S.A."/>
            <person name="Emes R.D."/>
            <person name="Winter E.E."/>
            <person name="Webber C."/>
            <person name="Brandt P."/>
            <person name="Nyakatura G."/>
            <person name="Adetobi M."/>
            <person name="Chiaromonte F."/>
            <person name="Elnitski L."/>
            <person name="Eswara P."/>
            <person name="Hardison R.C."/>
            <person name="Hou M."/>
            <person name="Kolbe D."/>
            <person name="Makova K."/>
            <person name="Miller W."/>
            <person name="Nekrutenko A."/>
            <person name="Riemer C."/>
            <person name="Schwartz S."/>
            <person name="Taylor J."/>
            <person name="Yang S."/>
            <person name="Zhang Y."/>
            <person name="Lindpaintner K."/>
            <person name="Andrews T.D."/>
            <person name="Caccamo M."/>
            <person name="Clamp M."/>
            <person name="Clarke L."/>
            <person name="Curwen V."/>
            <person name="Durbin R.M."/>
            <person name="Eyras E."/>
            <person name="Searle S.M."/>
            <person name="Cooper G.M."/>
            <person name="Batzoglou S."/>
            <person name="Brudno M."/>
            <person name="Sidow A."/>
            <person name="Stone E.A."/>
            <person name="Payseur B.A."/>
            <person name="Bourque G."/>
            <person name="Lopez-Otin C."/>
            <person name="Puente X.S."/>
            <person name="Chakrabarti K."/>
            <person name="Chatterji S."/>
            <person name="Dewey C."/>
            <person name="Pachter L."/>
            <person name="Bray N."/>
            <person name="Yap V.B."/>
            <person name="Caspi A."/>
            <person name="Tesler G."/>
            <person name="Pevzner P.A."/>
            <person name="Haussler D."/>
            <person name="Roskin K.M."/>
            <person name="Baertsch R."/>
            <person name="Clawson H."/>
            <person name="Furey T.S."/>
            <person name="Hinrichs A.S."/>
            <person name="Karolchik D."/>
            <person name="Kent W.J."/>
            <person name="Rosenbloom K.R."/>
            <person name="Trumbower H."/>
            <person name="Weirauch M."/>
            <person name="Cooper D.N."/>
            <person name="Stenson P.D."/>
            <person name="Ma B."/>
            <person name="Brent M."/>
            <person name="Arumugam M."/>
            <person name="Shteynberg D."/>
            <person name="Copley R.R."/>
            <person name="Taylor M.S."/>
            <person name="Riethman H."/>
            <person name="Mudunuri U."/>
            <person name="Peterson J."/>
            <person name="Guyer M."/>
            <person name="Felsenfeld A."/>
            <person name="Old S."/>
            <person name="Mockrin S."/>
            <person name="Collins F.S."/>
        </authorList>
    </citation>
    <scope>NUCLEOTIDE SEQUENCE [LARGE SCALE GENOMIC DNA]</scope>
    <source>
        <strain>Brown Norway</strain>
    </source>
</reference>
<reference key="5">
    <citation type="journal article" date="2011" name="Kidney Int.">
        <title>The hyperpolarization-activated cyclic nucleotide-gated HCN2 channel transports ammonium in the distal nephron.</title>
        <authorList>
            <person name="Carrisoza-Gaytan R."/>
            <person name="Rangel C."/>
            <person name="Salvador C."/>
            <person name="Saldana-Meyer R."/>
            <person name="Escalona C."/>
            <person name="Satlin L.M."/>
            <person name="Liu W."/>
            <person name="Zavilowitz B."/>
            <person name="Trujillo J."/>
            <person name="Bobadilla N.A."/>
            <person name="Escobar L.I."/>
        </authorList>
    </citation>
    <scope>FUNCTION</scope>
    <scope>TRANSPORTER ACTIVITY</scope>
    <scope>SUBCELLULAR LOCATION</scope>
    <source>
        <tissue>Kidney</tissue>
    </source>
</reference>
<reference key="6">
    <citation type="journal article" date="2012" name="Nat. Commun.">
        <title>Quantitative maps of protein phosphorylation sites across 14 different rat organs and tissues.</title>
        <authorList>
            <person name="Lundby A."/>
            <person name="Secher A."/>
            <person name="Lage K."/>
            <person name="Nordsborg N.B."/>
            <person name="Dmytriyev A."/>
            <person name="Lundby C."/>
            <person name="Olsen J.V."/>
        </authorList>
    </citation>
    <scope>PHOSPHORYLATION [LARGE SCALE ANALYSIS] AT SER-119; SER-134; SER-726; SER-750 AND SER-842</scope>
    <scope>IDENTIFICATION BY MASS SPECTROMETRY [LARGE SCALE ANALYSIS]</scope>
</reference>
<name>HCN2_RAT</name>